<keyword id="KW-0067">ATP-binding</keyword>
<keyword id="KW-0963">Cytoplasm</keyword>
<keyword id="KW-0238">DNA-binding</keyword>
<keyword id="KW-0413">Isomerase</keyword>
<keyword id="KW-0547">Nucleotide-binding</keyword>
<keyword id="KW-0799">Topoisomerase</keyword>
<proteinExistence type="inferred from homology"/>
<protein>
    <recommendedName>
        <fullName>DNA gyrase subunit B</fullName>
        <ecNumber evidence="2">5.6.2.2</ecNumber>
    </recommendedName>
</protein>
<dbReference type="EC" id="5.6.2.2" evidence="2"/>
<dbReference type="EMBL" id="D73436">
    <property type="protein sequence ID" value="BAA11161.1"/>
    <property type="molecule type" value="Genomic_DNA"/>
</dbReference>
<dbReference type="EMBL" id="D73421">
    <property type="protein sequence ID" value="BAA11146.1"/>
    <property type="molecule type" value="Genomic_DNA"/>
</dbReference>
<dbReference type="SMR" id="Q44273"/>
<dbReference type="eggNOG" id="COG0187">
    <property type="taxonomic scope" value="Bacteria"/>
</dbReference>
<dbReference type="GO" id="GO:0005737">
    <property type="term" value="C:cytoplasm"/>
    <property type="evidence" value="ECO:0007669"/>
    <property type="project" value="UniProtKB-SubCell"/>
</dbReference>
<dbReference type="GO" id="GO:0005524">
    <property type="term" value="F:ATP binding"/>
    <property type="evidence" value="ECO:0007669"/>
    <property type="project" value="UniProtKB-KW"/>
</dbReference>
<dbReference type="GO" id="GO:0003677">
    <property type="term" value="F:DNA binding"/>
    <property type="evidence" value="ECO:0007669"/>
    <property type="project" value="UniProtKB-KW"/>
</dbReference>
<dbReference type="GO" id="GO:0003918">
    <property type="term" value="F:DNA topoisomerase type II (double strand cut, ATP-hydrolyzing) activity"/>
    <property type="evidence" value="ECO:0007669"/>
    <property type="project" value="UniProtKB-EC"/>
</dbReference>
<dbReference type="GO" id="GO:0006265">
    <property type="term" value="P:DNA topological change"/>
    <property type="evidence" value="ECO:0007669"/>
    <property type="project" value="InterPro"/>
</dbReference>
<dbReference type="Gene3D" id="3.40.50.670">
    <property type="match status" value="1"/>
</dbReference>
<dbReference type="Gene3D" id="3.30.565.10">
    <property type="entry name" value="Histidine kinase-like ATPase, C-terminal domain"/>
    <property type="match status" value="1"/>
</dbReference>
<dbReference type="InterPro" id="IPR036890">
    <property type="entry name" value="HATPase_C_sf"/>
</dbReference>
<dbReference type="InterPro" id="IPR001241">
    <property type="entry name" value="Topo_IIA"/>
</dbReference>
<dbReference type="InterPro" id="IPR013760">
    <property type="entry name" value="Topo_IIA-like_dom_sf"/>
</dbReference>
<dbReference type="InterPro" id="IPR000565">
    <property type="entry name" value="Topo_IIA_B"/>
</dbReference>
<dbReference type="InterPro" id="IPR013759">
    <property type="entry name" value="Topo_IIA_B_C"/>
</dbReference>
<dbReference type="InterPro" id="IPR018522">
    <property type="entry name" value="TopoIIA_CS"/>
</dbReference>
<dbReference type="InterPro" id="IPR006171">
    <property type="entry name" value="TOPRIM_dom"/>
</dbReference>
<dbReference type="PANTHER" id="PTHR45866:SF1">
    <property type="entry name" value="DNA GYRASE SUBUNIT B, MITOCHONDRIAL"/>
    <property type="match status" value="1"/>
</dbReference>
<dbReference type="PANTHER" id="PTHR45866">
    <property type="entry name" value="DNA GYRASE/TOPOISOMERASE SUBUNIT B"/>
    <property type="match status" value="1"/>
</dbReference>
<dbReference type="Pfam" id="PF01751">
    <property type="entry name" value="Toprim"/>
    <property type="match status" value="1"/>
</dbReference>
<dbReference type="PRINTS" id="PR01159">
    <property type="entry name" value="DNAGYRASEB"/>
</dbReference>
<dbReference type="SMART" id="SM00433">
    <property type="entry name" value="TOP2c"/>
    <property type="match status" value="1"/>
</dbReference>
<dbReference type="SUPFAM" id="SSF55874">
    <property type="entry name" value="ATPase domain of HSP90 chaperone/DNA topoisomerase II/histidine kinase"/>
    <property type="match status" value="1"/>
</dbReference>
<dbReference type="SUPFAM" id="SSF56719">
    <property type="entry name" value="Type II DNA topoisomerase"/>
    <property type="match status" value="1"/>
</dbReference>
<dbReference type="PROSITE" id="PS00177">
    <property type="entry name" value="TOPOISOMERASE_II"/>
    <property type="match status" value="1"/>
</dbReference>
<dbReference type="PROSITE" id="PS50880">
    <property type="entry name" value="TOPRIM"/>
    <property type="match status" value="1"/>
</dbReference>
<sequence length="216" mass="23775">SYKVSGGLHGVGVSVVNALSSKLELTIHRAGHIHQQEYKHGDPVYPLKVIGDIETTGTTVRFWPSAETFSQTIFNVDILARRLRELSFLNAGVRIVLRDERVALEHIFDLEVGLSEKSALDIAGLPGKLADCQEKDPALSELYLVEGDSAGGSAKQGRNRKMQAILPLKGKILNVERARFDKMISSQEVGTLITALGCGIGREEYNPDKLRYHKII</sequence>
<comment type="function">
    <text evidence="1">A type II topoisomerase that negatively supercoils closed circular double-stranded (ds) DNA in an ATP-dependent manner to modulate DNA topology and maintain chromosomes in an underwound state. Negative supercoiling favors strand separation, and DNA replication, transcription, recombination and repair, all of which involve strand separation. Also able to catalyze the interconversion of other topological isomers of dsDNA rings, including catenanes and knotted rings. Type II topoisomerases break and join 2 DNA strands simultaneously in an ATP-dependent manner.</text>
</comment>
<comment type="catalytic activity">
    <reaction evidence="2">
        <text>ATP-dependent breakage, passage and rejoining of double-stranded DNA.</text>
        <dbReference type="EC" id="5.6.2.2"/>
    </reaction>
</comment>
<comment type="subunit">
    <text evidence="1">Heterotetramer, composed of two GyrA and two GyrB chains. In the heterotetramer, GyrA contains the active site tyrosine that forms a transient covalent intermediate with DNA, while GyrB binds cofactors and catalyzes ATP hydrolysis.</text>
</comment>
<comment type="subcellular location">
    <subcellularLocation>
        <location evidence="1">Cytoplasm</location>
    </subcellularLocation>
</comment>
<comment type="miscellaneous">
    <text evidence="1">Few gyrases are as efficient as E.coli at forming negative supercoils. Not all organisms have 2 type II topoisomerases; in organisms with a single type II topoisomerase this enzyme also has to decatenate newly replicated chromosomes.</text>
</comment>
<comment type="similarity">
    <text evidence="3">Belongs to the type II topoisomerase GyrB family.</text>
</comment>
<evidence type="ECO:0000250" key="1">
    <source>
        <dbReference type="UniProtKB" id="P0AES6"/>
    </source>
</evidence>
<evidence type="ECO:0000255" key="2">
    <source>
        <dbReference type="PROSITE-ProRule" id="PRU00995"/>
    </source>
</evidence>
<evidence type="ECO:0000305" key="3"/>
<organism>
    <name type="scientific">Acinetobacter bereziniae</name>
    <name type="common">Acinetobacter genomosp. 10</name>
    <dbReference type="NCBI Taxonomy" id="106648"/>
    <lineage>
        <taxon>Bacteria</taxon>
        <taxon>Pseudomonadati</taxon>
        <taxon>Pseudomonadota</taxon>
        <taxon>Gammaproteobacteria</taxon>
        <taxon>Moraxellales</taxon>
        <taxon>Moraxellaceae</taxon>
        <taxon>Acinetobacter</taxon>
    </lineage>
</organism>
<feature type="chain" id="PRO_0000145283" description="DNA gyrase subunit B">
    <location>
        <begin position="1" status="less than"/>
        <end position="216" status="greater than"/>
    </location>
</feature>
<feature type="domain" description="Toprim" evidence="2">
    <location>
        <begin position="140"/>
        <end position="216" status="greater than"/>
    </location>
</feature>
<feature type="site" description="Interaction with DNA" evidence="2">
    <location>
        <position position="171"/>
    </location>
</feature>
<feature type="site" description="Interaction with DNA" evidence="2">
    <location>
        <position position="174"/>
    </location>
</feature>
<feature type="non-consecutive residues" evidence="3">
    <location>
        <begin position="116"/>
        <end position="117"/>
    </location>
</feature>
<feature type="non-terminal residue">
    <location>
        <position position="1"/>
    </location>
</feature>
<feature type="non-terminal residue">
    <location>
        <position position="216"/>
    </location>
</feature>
<accession>Q44273</accession>
<accession>Q60168</accession>
<name>GYRB_ACIBZ</name>
<reference key="1">
    <citation type="journal article" date="1996" name="Int. J. Syst. Bacteriol.">
        <title>Phylogenetic analysis of Acinetobacter strains based on the nucleotide sequences of gyrB genes and on the amino acid sequences of their products.</title>
        <authorList>
            <person name="Yamamoto S."/>
            <person name="Harayama S."/>
        </authorList>
    </citation>
    <scope>NUCLEOTIDE SEQUENCE [GENOMIC DNA]</scope>
    <source>
        <strain>ATCC 17924 / DSM 25435 / CCUG 26493 / CIP 70.12 / LMG 1003 / NCIMB 9019 / 69</strain>
    </source>
</reference>
<gene>
    <name type="primary">gyrB</name>
</gene>